<name>RSXA_ECOLU</name>
<proteinExistence type="inferred from homology"/>
<protein>
    <recommendedName>
        <fullName evidence="1">Ion-translocating oxidoreductase complex subunit A</fullName>
        <ecNumber evidence="1">7.-.-.-</ecNumber>
    </recommendedName>
    <alternativeName>
        <fullName evidence="1">Rsx electron transport complex subunit A</fullName>
    </alternativeName>
</protein>
<accession>B7NB81</accession>
<comment type="function">
    <text evidence="1">Part of a membrane-bound complex that couples electron transfer with translocation of ions across the membrane. Required to maintain the reduced state of SoxR.</text>
</comment>
<comment type="subunit">
    <text evidence="1">The complex is composed of six subunits: RsxA, RsxB, RsxC, RsxD, RsxE and RsxG.</text>
</comment>
<comment type="subcellular location">
    <subcellularLocation>
        <location evidence="1">Cell inner membrane</location>
        <topology evidence="1">Multi-pass membrane protein</topology>
    </subcellularLocation>
</comment>
<comment type="similarity">
    <text evidence="1">Belongs to the NqrDE/RnfAE family.</text>
</comment>
<keyword id="KW-0997">Cell inner membrane</keyword>
<keyword id="KW-1003">Cell membrane</keyword>
<keyword id="KW-0249">Electron transport</keyword>
<keyword id="KW-0472">Membrane</keyword>
<keyword id="KW-1278">Translocase</keyword>
<keyword id="KW-0812">Transmembrane</keyword>
<keyword id="KW-1133">Transmembrane helix</keyword>
<keyword id="KW-0813">Transport</keyword>
<organism>
    <name type="scientific">Escherichia coli O17:K52:H18 (strain UMN026 / ExPEC)</name>
    <dbReference type="NCBI Taxonomy" id="585056"/>
    <lineage>
        <taxon>Bacteria</taxon>
        <taxon>Pseudomonadati</taxon>
        <taxon>Pseudomonadota</taxon>
        <taxon>Gammaproteobacteria</taxon>
        <taxon>Enterobacterales</taxon>
        <taxon>Enterobacteriaceae</taxon>
        <taxon>Escherichia</taxon>
    </lineage>
</organism>
<gene>
    <name evidence="1" type="primary">rsxA</name>
    <name type="ordered locus">ECUMN_1918</name>
</gene>
<reference key="1">
    <citation type="journal article" date="2009" name="PLoS Genet.">
        <title>Organised genome dynamics in the Escherichia coli species results in highly diverse adaptive paths.</title>
        <authorList>
            <person name="Touchon M."/>
            <person name="Hoede C."/>
            <person name="Tenaillon O."/>
            <person name="Barbe V."/>
            <person name="Baeriswyl S."/>
            <person name="Bidet P."/>
            <person name="Bingen E."/>
            <person name="Bonacorsi S."/>
            <person name="Bouchier C."/>
            <person name="Bouvet O."/>
            <person name="Calteau A."/>
            <person name="Chiapello H."/>
            <person name="Clermont O."/>
            <person name="Cruveiller S."/>
            <person name="Danchin A."/>
            <person name="Diard M."/>
            <person name="Dossat C."/>
            <person name="Karoui M.E."/>
            <person name="Frapy E."/>
            <person name="Garry L."/>
            <person name="Ghigo J.M."/>
            <person name="Gilles A.M."/>
            <person name="Johnson J."/>
            <person name="Le Bouguenec C."/>
            <person name="Lescat M."/>
            <person name="Mangenot S."/>
            <person name="Martinez-Jehanne V."/>
            <person name="Matic I."/>
            <person name="Nassif X."/>
            <person name="Oztas S."/>
            <person name="Petit M.A."/>
            <person name="Pichon C."/>
            <person name="Rouy Z."/>
            <person name="Ruf C.S."/>
            <person name="Schneider D."/>
            <person name="Tourret J."/>
            <person name="Vacherie B."/>
            <person name="Vallenet D."/>
            <person name="Medigue C."/>
            <person name="Rocha E.P.C."/>
            <person name="Denamur E."/>
        </authorList>
    </citation>
    <scope>NUCLEOTIDE SEQUENCE [LARGE SCALE GENOMIC DNA]</scope>
    <source>
        <strain>UMN026 / ExPEC</strain>
    </source>
</reference>
<evidence type="ECO:0000255" key="1">
    <source>
        <dbReference type="HAMAP-Rule" id="MF_00459"/>
    </source>
</evidence>
<sequence>MTDYLLLFVGTVLVNNFVLVKFLGLCPFMGVSKKLETAMGMGLATTFVMTLASICAWLIDTWILIPLNLIYLRTLAFILVIAVVVQFTEMVVRKTSPVLYRLLGIFLPLITTNCAVLGVALLNINLGHNFLQSALYGFSAAVGFSLVMVLFAAIRERLAVADVPAPFRGNAIALITAGLMSLAFMGFSGLVKL</sequence>
<dbReference type="EC" id="7.-.-.-" evidence="1"/>
<dbReference type="EMBL" id="CU928163">
    <property type="protein sequence ID" value="CAR13115.1"/>
    <property type="molecule type" value="Genomic_DNA"/>
</dbReference>
<dbReference type="RefSeq" id="WP_000133193.1">
    <property type="nucleotide sequence ID" value="NC_011751.1"/>
</dbReference>
<dbReference type="RefSeq" id="YP_002412647.1">
    <property type="nucleotide sequence ID" value="NC_011751.1"/>
</dbReference>
<dbReference type="SMR" id="B7NB81"/>
<dbReference type="STRING" id="585056.ECUMN_1918"/>
<dbReference type="GeneID" id="89516393"/>
<dbReference type="KEGG" id="eum:ECUMN_1918"/>
<dbReference type="PATRIC" id="fig|585056.7.peg.2101"/>
<dbReference type="HOGENOM" id="CLU_095255_1_0_6"/>
<dbReference type="Proteomes" id="UP000007097">
    <property type="component" value="Chromosome"/>
</dbReference>
<dbReference type="GO" id="GO:0005886">
    <property type="term" value="C:plasma membrane"/>
    <property type="evidence" value="ECO:0007669"/>
    <property type="project" value="UniProtKB-SubCell"/>
</dbReference>
<dbReference type="GO" id="GO:0022900">
    <property type="term" value="P:electron transport chain"/>
    <property type="evidence" value="ECO:0007669"/>
    <property type="project" value="UniProtKB-UniRule"/>
</dbReference>
<dbReference type="HAMAP" id="MF_00459">
    <property type="entry name" value="RsxA_RnfA"/>
    <property type="match status" value="1"/>
</dbReference>
<dbReference type="InterPro" id="IPR011293">
    <property type="entry name" value="Ion_transpt_RnfA/RsxA"/>
</dbReference>
<dbReference type="InterPro" id="IPR003667">
    <property type="entry name" value="NqrDE/RnfAE"/>
</dbReference>
<dbReference type="InterPro" id="IPR050133">
    <property type="entry name" value="NqrDE/RnfAE_oxidrdctase"/>
</dbReference>
<dbReference type="NCBIfam" id="NF003481">
    <property type="entry name" value="PRK05151.1"/>
    <property type="match status" value="1"/>
</dbReference>
<dbReference type="NCBIfam" id="TIGR01943">
    <property type="entry name" value="rnfA"/>
    <property type="match status" value="1"/>
</dbReference>
<dbReference type="PANTHER" id="PTHR30335">
    <property type="entry name" value="INTEGRAL MEMBRANE PROTEIN OF SOXR-REDUCING COMPLEX"/>
    <property type="match status" value="1"/>
</dbReference>
<dbReference type="PANTHER" id="PTHR30335:SF0">
    <property type="entry name" value="ION-TRANSLOCATING OXIDOREDUCTASE COMPLEX SUBUNIT A"/>
    <property type="match status" value="1"/>
</dbReference>
<dbReference type="Pfam" id="PF02508">
    <property type="entry name" value="Rnf-Nqr"/>
    <property type="match status" value="1"/>
</dbReference>
<dbReference type="PIRSF" id="PIRSF006102">
    <property type="entry name" value="NQR_DE"/>
    <property type="match status" value="1"/>
</dbReference>
<feature type="chain" id="PRO_1000191720" description="Ion-translocating oxidoreductase complex subunit A">
    <location>
        <begin position="1"/>
        <end position="193"/>
    </location>
</feature>
<feature type="transmembrane region" description="Helical" evidence="1">
    <location>
        <begin position="5"/>
        <end position="25"/>
    </location>
</feature>
<feature type="transmembrane region" description="Helical" evidence="1">
    <location>
        <begin position="39"/>
        <end position="59"/>
    </location>
</feature>
<feature type="transmembrane region" description="Helical" evidence="1">
    <location>
        <begin position="63"/>
        <end position="83"/>
    </location>
</feature>
<feature type="transmembrane region" description="Helical" evidence="1">
    <location>
        <begin position="102"/>
        <end position="122"/>
    </location>
</feature>
<feature type="transmembrane region" description="Helical" evidence="1">
    <location>
        <begin position="134"/>
        <end position="154"/>
    </location>
</feature>
<feature type="transmembrane region" description="Helical" evidence="1">
    <location>
        <begin position="171"/>
        <end position="191"/>
    </location>
</feature>